<gene>
    <name type="ordered locus">RPA4217</name>
</gene>
<evidence type="ECO:0000305" key="1"/>
<protein>
    <recommendedName>
        <fullName>UPF0337 protein RPA4217</fullName>
    </recommendedName>
</protein>
<proteinExistence type="inferred from homology"/>
<name>Y4217_RHOPA</name>
<organism>
    <name type="scientific">Rhodopseudomonas palustris (strain ATCC BAA-98 / CGA009)</name>
    <dbReference type="NCBI Taxonomy" id="258594"/>
    <lineage>
        <taxon>Bacteria</taxon>
        <taxon>Pseudomonadati</taxon>
        <taxon>Pseudomonadota</taxon>
        <taxon>Alphaproteobacteria</taxon>
        <taxon>Hyphomicrobiales</taxon>
        <taxon>Nitrobacteraceae</taxon>
        <taxon>Rhodopseudomonas</taxon>
    </lineage>
</organism>
<comment type="similarity">
    <text evidence="1">Belongs to the UPF0337 (CsbD) family.</text>
</comment>
<accession>Q6N233</accession>
<feature type="chain" id="PRO_0000210027" description="UPF0337 protein RPA4217">
    <location>
        <begin position="1"/>
        <end position="66"/>
    </location>
</feature>
<reference key="1">
    <citation type="journal article" date="2004" name="Nat. Biotechnol.">
        <title>Complete genome sequence of the metabolically versatile photosynthetic bacterium Rhodopseudomonas palustris.</title>
        <authorList>
            <person name="Larimer F.W."/>
            <person name="Chain P."/>
            <person name="Hauser L."/>
            <person name="Lamerdin J.E."/>
            <person name="Malfatti S."/>
            <person name="Do L."/>
            <person name="Land M.L."/>
            <person name="Pelletier D.A."/>
            <person name="Beatty J.T."/>
            <person name="Lang A.S."/>
            <person name="Tabita F.R."/>
            <person name="Gibson J.L."/>
            <person name="Hanson T.E."/>
            <person name="Bobst C."/>
            <person name="Torres y Torres J.L."/>
            <person name="Peres C."/>
            <person name="Harrison F.H."/>
            <person name="Gibson J."/>
            <person name="Harwood C.S."/>
        </authorList>
    </citation>
    <scope>NUCLEOTIDE SEQUENCE [LARGE SCALE GENOMIC DNA]</scope>
    <source>
        <strain>ATCC BAA-98 / CGA009</strain>
    </source>
</reference>
<dbReference type="EMBL" id="BX572606">
    <property type="protein sequence ID" value="CAE29658.1"/>
    <property type="molecule type" value="Genomic_DNA"/>
</dbReference>
<dbReference type="RefSeq" id="WP_011159752.1">
    <property type="nucleotide sequence ID" value="NZ_CP116810.1"/>
</dbReference>
<dbReference type="SMR" id="Q6N233"/>
<dbReference type="STRING" id="258594.RPA4217"/>
<dbReference type="GeneID" id="66895343"/>
<dbReference type="eggNOG" id="COG3237">
    <property type="taxonomic scope" value="Bacteria"/>
</dbReference>
<dbReference type="HOGENOM" id="CLU_135567_4_1_5"/>
<dbReference type="PhylomeDB" id="Q6N233"/>
<dbReference type="Gene3D" id="1.10.1470.10">
    <property type="entry name" value="YjbJ"/>
    <property type="match status" value="1"/>
</dbReference>
<dbReference type="InterPro" id="IPR008462">
    <property type="entry name" value="CsbD"/>
</dbReference>
<dbReference type="InterPro" id="IPR050423">
    <property type="entry name" value="UPF0337_stress_rsp"/>
</dbReference>
<dbReference type="InterPro" id="IPR026042">
    <property type="entry name" value="YjbJ"/>
</dbReference>
<dbReference type="InterPro" id="IPR036629">
    <property type="entry name" value="YjbJ_sf"/>
</dbReference>
<dbReference type="PANTHER" id="PTHR34977">
    <property type="entry name" value="UPF0337 PROTEIN YJBJ"/>
    <property type="match status" value="1"/>
</dbReference>
<dbReference type="PANTHER" id="PTHR34977:SF1">
    <property type="entry name" value="UPF0337 PROTEIN YJBJ"/>
    <property type="match status" value="1"/>
</dbReference>
<dbReference type="Pfam" id="PF05532">
    <property type="entry name" value="CsbD"/>
    <property type="match status" value="1"/>
</dbReference>
<dbReference type="PIRSF" id="PIRSF039008">
    <property type="entry name" value="YjbJ"/>
    <property type="match status" value="1"/>
</dbReference>
<dbReference type="SUPFAM" id="SSF69047">
    <property type="entry name" value="Hypothetical protein YjbJ"/>
    <property type="match status" value="1"/>
</dbReference>
<sequence>MDWNRVEGNWKQFKGNVKEKWGKLTDDDLDVIEGRRDQLEGKLQERYGYAKDQVRKDVDDWFTTLK</sequence>